<reference key="1">
    <citation type="journal article" date="2010" name="Genome Biol.">
        <title>Structure and dynamics of the pan-genome of Streptococcus pneumoniae and closely related species.</title>
        <authorList>
            <person name="Donati C."/>
            <person name="Hiller N.L."/>
            <person name="Tettelin H."/>
            <person name="Muzzi A."/>
            <person name="Croucher N.J."/>
            <person name="Angiuoli S.V."/>
            <person name="Oggioni M."/>
            <person name="Dunning Hotopp J.C."/>
            <person name="Hu F.Z."/>
            <person name="Riley D.R."/>
            <person name="Covacci A."/>
            <person name="Mitchell T.J."/>
            <person name="Bentley S.D."/>
            <person name="Kilian M."/>
            <person name="Ehrlich G.D."/>
            <person name="Rappuoli R."/>
            <person name="Moxon E.R."/>
            <person name="Masignani V."/>
        </authorList>
    </citation>
    <scope>NUCLEOTIDE SEQUENCE [LARGE SCALE GENOMIC DNA]</scope>
    <source>
        <strain>JJA</strain>
    </source>
</reference>
<organism>
    <name type="scientific">Streptococcus pneumoniae (strain JJA)</name>
    <dbReference type="NCBI Taxonomy" id="488222"/>
    <lineage>
        <taxon>Bacteria</taxon>
        <taxon>Bacillati</taxon>
        <taxon>Bacillota</taxon>
        <taxon>Bacilli</taxon>
        <taxon>Lactobacillales</taxon>
        <taxon>Streptococcaceae</taxon>
        <taxon>Streptococcus</taxon>
    </lineage>
</organism>
<sequence>MTKTIAINAGSSSLKWQLYLMPEEKVLAKGLIERIGLKDSISTVKFDGRSEQQILDIENHTQAVKILLDDLIRFDIIKAYDEITGVGHRVVAGGEYFKESTVVEGDVLEKVEELSLLAPLHNPANAAGVRAFKELLPDITSVVVFDTSFHTSMPEKAYRYPLPTKYYTENKVRKYGAHGTSHQFVAGEAAKLLGRPLEDLKLITCHIGNGGSITAVKAGKSVDTSMGFTPLGGIMMGTRTGDIDPAIIPYLMQYTEDFNTPEDISRVLNRESGLLGVSANSSDMRDIEAAVAEWNHEASLAYEMYVDRIQKHIGQYFAVLNGADAIVFTAGVGENAENFRRDVISGISWFGCDVDDEKNVFGVTGDISTEAAKIRVLVIPTDEELVIARDVERLKK</sequence>
<dbReference type="EC" id="2.7.2.1" evidence="1"/>
<dbReference type="EMBL" id="CP000919">
    <property type="protein sequence ID" value="ACO19315.1"/>
    <property type="molecule type" value="Genomic_DNA"/>
</dbReference>
<dbReference type="RefSeq" id="WP_000167771.1">
    <property type="nucleotide sequence ID" value="NC_012466.1"/>
</dbReference>
<dbReference type="SMR" id="C1CGX4"/>
<dbReference type="KEGG" id="sjj:SPJ_2050"/>
<dbReference type="HOGENOM" id="CLU_020352_0_1_9"/>
<dbReference type="UniPathway" id="UPA00340">
    <property type="reaction ID" value="UER00458"/>
</dbReference>
<dbReference type="Proteomes" id="UP000002206">
    <property type="component" value="Chromosome"/>
</dbReference>
<dbReference type="GO" id="GO:0005737">
    <property type="term" value="C:cytoplasm"/>
    <property type="evidence" value="ECO:0007669"/>
    <property type="project" value="UniProtKB-SubCell"/>
</dbReference>
<dbReference type="GO" id="GO:0008776">
    <property type="term" value="F:acetate kinase activity"/>
    <property type="evidence" value="ECO:0007669"/>
    <property type="project" value="UniProtKB-UniRule"/>
</dbReference>
<dbReference type="GO" id="GO:0005524">
    <property type="term" value="F:ATP binding"/>
    <property type="evidence" value="ECO:0007669"/>
    <property type="project" value="UniProtKB-KW"/>
</dbReference>
<dbReference type="GO" id="GO:0000287">
    <property type="term" value="F:magnesium ion binding"/>
    <property type="evidence" value="ECO:0007669"/>
    <property type="project" value="UniProtKB-UniRule"/>
</dbReference>
<dbReference type="GO" id="GO:0006083">
    <property type="term" value="P:acetate metabolic process"/>
    <property type="evidence" value="ECO:0007669"/>
    <property type="project" value="TreeGrafter"/>
</dbReference>
<dbReference type="GO" id="GO:0006085">
    <property type="term" value="P:acetyl-CoA biosynthetic process"/>
    <property type="evidence" value="ECO:0007669"/>
    <property type="project" value="UniProtKB-UniRule"/>
</dbReference>
<dbReference type="CDD" id="cd24010">
    <property type="entry name" value="ASKHA_NBD_AcK_PK"/>
    <property type="match status" value="1"/>
</dbReference>
<dbReference type="Gene3D" id="3.30.420.40">
    <property type="match status" value="2"/>
</dbReference>
<dbReference type="HAMAP" id="MF_00020">
    <property type="entry name" value="Acetate_kinase"/>
    <property type="match status" value="1"/>
</dbReference>
<dbReference type="InterPro" id="IPR004372">
    <property type="entry name" value="Ac/propionate_kinase"/>
</dbReference>
<dbReference type="InterPro" id="IPR000890">
    <property type="entry name" value="Aliphatic_acid_kin_short-chain"/>
</dbReference>
<dbReference type="InterPro" id="IPR023865">
    <property type="entry name" value="Aliphatic_acid_kinase_CS"/>
</dbReference>
<dbReference type="InterPro" id="IPR043129">
    <property type="entry name" value="ATPase_NBD"/>
</dbReference>
<dbReference type="NCBIfam" id="TIGR00016">
    <property type="entry name" value="ackA"/>
    <property type="match status" value="1"/>
</dbReference>
<dbReference type="PANTHER" id="PTHR21060">
    <property type="entry name" value="ACETATE KINASE"/>
    <property type="match status" value="1"/>
</dbReference>
<dbReference type="PANTHER" id="PTHR21060:SF15">
    <property type="entry name" value="ACETATE KINASE-RELATED"/>
    <property type="match status" value="1"/>
</dbReference>
<dbReference type="Pfam" id="PF00871">
    <property type="entry name" value="Acetate_kinase"/>
    <property type="match status" value="1"/>
</dbReference>
<dbReference type="PIRSF" id="PIRSF000722">
    <property type="entry name" value="Acetate_prop_kin"/>
    <property type="match status" value="1"/>
</dbReference>
<dbReference type="PRINTS" id="PR00471">
    <property type="entry name" value="ACETATEKNASE"/>
</dbReference>
<dbReference type="SUPFAM" id="SSF53067">
    <property type="entry name" value="Actin-like ATPase domain"/>
    <property type="match status" value="2"/>
</dbReference>
<dbReference type="PROSITE" id="PS01075">
    <property type="entry name" value="ACETATE_KINASE_1"/>
    <property type="match status" value="1"/>
</dbReference>
<dbReference type="PROSITE" id="PS01076">
    <property type="entry name" value="ACETATE_KINASE_2"/>
    <property type="match status" value="1"/>
</dbReference>
<gene>
    <name evidence="1" type="primary">ackA</name>
    <name type="ordered locus">SPJ_2050</name>
</gene>
<comment type="function">
    <text evidence="1">Catalyzes the formation of acetyl phosphate from acetate and ATP. Can also catalyze the reverse reaction.</text>
</comment>
<comment type="catalytic activity">
    <reaction evidence="1">
        <text>acetate + ATP = acetyl phosphate + ADP</text>
        <dbReference type="Rhea" id="RHEA:11352"/>
        <dbReference type="ChEBI" id="CHEBI:22191"/>
        <dbReference type="ChEBI" id="CHEBI:30089"/>
        <dbReference type="ChEBI" id="CHEBI:30616"/>
        <dbReference type="ChEBI" id="CHEBI:456216"/>
        <dbReference type="EC" id="2.7.2.1"/>
    </reaction>
</comment>
<comment type="cofactor">
    <cofactor evidence="1">
        <name>Mg(2+)</name>
        <dbReference type="ChEBI" id="CHEBI:18420"/>
    </cofactor>
    <cofactor evidence="1">
        <name>Mn(2+)</name>
        <dbReference type="ChEBI" id="CHEBI:29035"/>
    </cofactor>
    <text evidence="1">Mg(2+). Can also accept Mn(2+).</text>
</comment>
<comment type="pathway">
    <text evidence="1">Metabolic intermediate biosynthesis; acetyl-CoA biosynthesis; acetyl-CoA from acetate: step 1/2.</text>
</comment>
<comment type="subunit">
    <text evidence="1">Homodimer.</text>
</comment>
<comment type="subcellular location">
    <subcellularLocation>
        <location evidence="1">Cytoplasm</location>
    </subcellularLocation>
</comment>
<comment type="similarity">
    <text evidence="1">Belongs to the acetokinase family.</text>
</comment>
<protein>
    <recommendedName>
        <fullName evidence="1">Acetate kinase</fullName>
        <ecNumber evidence="1">2.7.2.1</ecNumber>
    </recommendedName>
    <alternativeName>
        <fullName evidence="1">Acetokinase</fullName>
    </alternativeName>
</protein>
<proteinExistence type="inferred from homology"/>
<accession>C1CGX4</accession>
<evidence type="ECO:0000255" key="1">
    <source>
        <dbReference type="HAMAP-Rule" id="MF_00020"/>
    </source>
</evidence>
<name>ACKA_STRZJ</name>
<keyword id="KW-0067">ATP-binding</keyword>
<keyword id="KW-0963">Cytoplasm</keyword>
<keyword id="KW-0418">Kinase</keyword>
<keyword id="KW-0460">Magnesium</keyword>
<keyword id="KW-0479">Metal-binding</keyword>
<keyword id="KW-0547">Nucleotide-binding</keyword>
<keyword id="KW-0808">Transferase</keyword>
<feature type="chain" id="PRO_1000116813" description="Acetate kinase">
    <location>
        <begin position="1"/>
        <end position="396"/>
    </location>
</feature>
<feature type="active site" description="Proton donor/acceptor" evidence="1">
    <location>
        <position position="146"/>
    </location>
</feature>
<feature type="binding site" evidence="1">
    <location>
        <position position="8"/>
    </location>
    <ligand>
        <name>Mg(2+)</name>
        <dbReference type="ChEBI" id="CHEBI:18420"/>
    </ligand>
</feature>
<feature type="binding site" evidence="1">
    <location>
        <position position="15"/>
    </location>
    <ligand>
        <name>ATP</name>
        <dbReference type="ChEBI" id="CHEBI:30616"/>
    </ligand>
</feature>
<feature type="binding site" evidence="1">
    <location>
        <position position="89"/>
    </location>
    <ligand>
        <name>substrate</name>
    </ligand>
</feature>
<feature type="binding site" evidence="1">
    <location>
        <begin position="206"/>
        <end position="210"/>
    </location>
    <ligand>
        <name>ATP</name>
        <dbReference type="ChEBI" id="CHEBI:30616"/>
    </ligand>
</feature>
<feature type="binding site" evidence="1">
    <location>
        <begin position="283"/>
        <end position="285"/>
    </location>
    <ligand>
        <name>ATP</name>
        <dbReference type="ChEBI" id="CHEBI:30616"/>
    </ligand>
</feature>
<feature type="binding site" evidence="1">
    <location>
        <begin position="331"/>
        <end position="335"/>
    </location>
    <ligand>
        <name>ATP</name>
        <dbReference type="ChEBI" id="CHEBI:30616"/>
    </ligand>
</feature>
<feature type="binding site" evidence="1">
    <location>
        <position position="383"/>
    </location>
    <ligand>
        <name>Mg(2+)</name>
        <dbReference type="ChEBI" id="CHEBI:18420"/>
    </ligand>
</feature>
<feature type="site" description="Transition state stabilizer" evidence="1">
    <location>
        <position position="178"/>
    </location>
</feature>
<feature type="site" description="Transition state stabilizer" evidence="1">
    <location>
        <position position="239"/>
    </location>
</feature>